<accession>Q552Z2</accession>
<accession>Q869K5</accession>
<sequence>MQKIKEGYRRRHDYIIPKFISFQSGYLDFSFYQVSLKNVKYLDLSSYYQLHAPRRFRKIVEYLNLSYGQLLTLGTLPKYVMSLDLSSYNQLFTPGRLPIRVSLDLSSYNQLFTPGRLPDTVDYLKLSSYNQLFTPGTLPNHMVYLNLSSYNQPLTPGTLPNKVKYLVLSSYNQLLTPGTLPNNVKYVDLSSYNKLLTPETLPNKVKYLVLSSYDQLLTPGTLPNNVKCVDLSSYDKLLTPGTLPNNVKYVDLSSYNKLLTPRTLPNNVECLVLSSYNQLLTPGILPNYVKYLDISSYNQLLTPGTLSNNVEYLDLSSYNQVLAPKTIPNNVKCLDCPSYKQSLISETFPNRVGDLELSDHPKHVNDNWEIIKPQKNISENKVYYTTKHKNAKIIDVLNICKCSLKLYGYVKDRNNEFNIYFEYIDKAIPLSRLLEKLNKKEQFIVATEIIKSIKSIHEMGIIHFDIKCQNILILYDENEKMLPTDFIKIIGFDHSTLDSEVNSNIIGVTETHMAPEIKLKNGKLGYKSDIWSLGCTLIEIVGGNLKLLDINGIPLIPDHLSNLFKNTIQHCLQINPNARFNANELYNYVIKDSIMEPIEPIYLPNQCTNLPLFNEVIVPSGFFGIKYLELQAYNQPIDSIFIFNGVEYLILQSFNHPLGPGILPESIKYLKLPSFNHPLKEGSIPRSVIHLVFNKFNQFSLDEINLILPKFLDFGDAFDIEKYGILIPEDSILTLRTGFTFNQPINQRYIPSSVTDLQLYNYNLKILPHSIPRSIIMLTLGSNFTHFESLSNLPSSIINLTFGFKNNFKIAELKKYIPSHITSININGKIVNFKKSSPLNTFNQSTDNILNNNEHFKEDWEIISTLGSGNFGKVFKARKINGIINGSKVSLCAIKKIEKKDKLKIKLSTEVEILNKLKDNEHSMKYYGYGYDEDDNLFIYTEYIEGSTSISDLIKKKPNNRFEEEEIKSLMIKIVKALSKIHESGVIHRDIKSDHIILAQDKNNETIVKFIDFGLSKQIEKNSKYYSFVGTDSHMAPEVKLQNGKAGSKSDIFCIGCTMIEMAGLNLCHSERDDKGIPSIPTHLSNSFKNIIQNCLKFDTNARHSVESLIITLSNIQIEGDSVFEKYLSPNLKKLELKTNEPILLGSIGNEINYLSLPIYNQMITPGALPPSVQYLLFNKLNQYLECDSIPESVKYLDLGNEFDIEKNGINLSNESILVLRCGFNFTQPVSQRLLPYSVTDLQLYNYNINLKRNSIPTLVTSLTLGSNFTNIESLSFLPENVNSLAIGIKDEDEKLTKEIEKIIQTKKSITSFKINGIQRN</sequence>
<evidence type="ECO:0000250" key="1">
    <source>
        <dbReference type="UniProtKB" id="P28523"/>
    </source>
</evidence>
<evidence type="ECO:0000250" key="2">
    <source>
        <dbReference type="UniProtKB" id="Q869N2"/>
    </source>
</evidence>
<evidence type="ECO:0000250" key="3">
    <source>
        <dbReference type="UniProtKB" id="Q8T126"/>
    </source>
</evidence>
<evidence type="ECO:0000255" key="4"/>
<evidence type="ECO:0000255" key="5">
    <source>
        <dbReference type="PROSITE-ProRule" id="PRU00159"/>
    </source>
</evidence>
<evidence type="ECO:0000312" key="6">
    <source>
        <dbReference type="EMBL" id="EAL69690.1"/>
    </source>
</evidence>
<gene>
    <name evidence="6" type="primary">fnkE</name>
    <name type="synonym">FNIPK-E</name>
    <name type="ORF">DDB_G0275879</name>
</gene>
<organism>
    <name type="scientific">Dictyostelium discoideum</name>
    <name type="common">Social amoeba</name>
    <dbReference type="NCBI Taxonomy" id="44689"/>
    <lineage>
        <taxon>Eukaryota</taxon>
        <taxon>Amoebozoa</taxon>
        <taxon>Evosea</taxon>
        <taxon>Eumycetozoa</taxon>
        <taxon>Dictyostelia</taxon>
        <taxon>Dictyosteliales</taxon>
        <taxon>Dictyosteliaceae</taxon>
        <taxon>Dictyostelium</taxon>
    </lineage>
</organism>
<dbReference type="EC" id="2.7.11.1"/>
<dbReference type="EMBL" id="AAFI02000013">
    <property type="protein sequence ID" value="EAL69690.1"/>
    <property type="molecule type" value="Genomic_DNA"/>
</dbReference>
<dbReference type="RefSeq" id="XP_643528.1">
    <property type="nucleotide sequence ID" value="XM_638436.1"/>
</dbReference>
<dbReference type="SMR" id="Q552Z2"/>
<dbReference type="FunCoup" id="Q552Z2">
    <property type="interactions" value="640"/>
</dbReference>
<dbReference type="STRING" id="44689.Q552Z2"/>
<dbReference type="PaxDb" id="44689-DDB0229870"/>
<dbReference type="EnsemblProtists" id="EAL69690">
    <property type="protein sequence ID" value="EAL69690"/>
    <property type="gene ID" value="DDB_G0275879"/>
</dbReference>
<dbReference type="GeneID" id="8620110"/>
<dbReference type="KEGG" id="ddi:DDB_G0275879"/>
<dbReference type="dictyBase" id="DDB_G0275879">
    <property type="gene designation" value="fnkE"/>
</dbReference>
<dbReference type="VEuPathDB" id="AmoebaDB:DDB_G0275879"/>
<dbReference type="eggNOG" id="KOG0198">
    <property type="taxonomic scope" value="Eukaryota"/>
</dbReference>
<dbReference type="eggNOG" id="KOG4645">
    <property type="taxonomic scope" value="Eukaryota"/>
</dbReference>
<dbReference type="HOGENOM" id="CLU_259886_0_0_1"/>
<dbReference type="InParanoid" id="Q552Z2"/>
<dbReference type="OMA" id="YNQLFTP"/>
<dbReference type="PhylomeDB" id="Q552Z2"/>
<dbReference type="PRO" id="PR:Q552Z2"/>
<dbReference type="Proteomes" id="UP000002195">
    <property type="component" value="Chromosome 2"/>
</dbReference>
<dbReference type="GO" id="GO:0005524">
    <property type="term" value="F:ATP binding"/>
    <property type="evidence" value="ECO:0007669"/>
    <property type="project" value="UniProtKB-KW"/>
</dbReference>
<dbReference type="GO" id="GO:0046872">
    <property type="term" value="F:metal ion binding"/>
    <property type="evidence" value="ECO:0007669"/>
    <property type="project" value="UniProtKB-KW"/>
</dbReference>
<dbReference type="GO" id="GO:0106310">
    <property type="term" value="F:protein serine kinase activity"/>
    <property type="evidence" value="ECO:0007669"/>
    <property type="project" value="RHEA"/>
</dbReference>
<dbReference type="GO" id="GO:0004674">
    <property type="term" value="F:protein serine/threonine kinase activity"/>
    <property type="evidence" value="ECO:0007669"/>
    <property type="project" value="UniProtKB-KW"/>
</dbReference>
<dbReference type="Gene3D" id="3.80.10.10">
    <property type="entry name" value="Ribonuclease Inhibitor"/>
    <property type="match status" value="1"/>
</dbReference>
<dbReference type="Gene3D" id="1.10.510.10">
    <property type="entry name" value="Transferase(Phosphotransferase) domain 1"/>
    <property type="match status" value="2"/>
</dbReference>
<dbReference type="InterPro" id="IPR008615">
    <property type="entry name" value="FNIP"/>
</dbReference>
<dbReference type="InterPro" id="IPR011009">
    <property type="entry name" value="Kinase-like_dom_sf"/>
</dbReference>
<dbReference type="InterPro" id="IPR032675">
    <property type="entry name" value="LRR_dom_sf"/>
</dbReference>
<dbReference type="InterPro" id="IPR000719">
    <property type="entry name" value="Prot_kinase_dom"/>
</dbReference>
<dbReference type="InterPro" id="IPR017441">
    <property type="entry name" value="Protein_kinase_ATP_BS"/>
</dbReference>
<dbReference type="InterPro" id="IPR008271">
    <property type="entry name" value="Ser/Thr_kinase_AS"/>
</dbReference>
<dbReference type="InterPro" id="IPR051251">
    <property type="entry name" value="STK_FNIP-Repeat"/>
</dbReference>
<dbReference type="InterPro" id="IPR036322">
    <property type="entry name" value="WD40_repeat_dom_sf"/>
</dbReference>
<dbReference type="PANTHER" id="PTHR32134">
    <property type="entry name" value="FNIP REPEAT-CONTAINING PROTEIN"/>
    <property type="match status" value="1"/>
</dbReference>
<dbReference type="PANTHER" id="PTHR32134:SF92">
    <property type="entry name" value="FNIP REPEAT-CONTAINING PROTEIN"/>
    <property type="match status" value="1"/>
</dbReference>
<dbReference type="Pfam" id="PF05725">
    <property type="entry name" value="FNIP"/>
    <property type="match status" value="9"/>
</dbReference>
<dbReference type="Pfam" id="PF00069">
    <property type="entry name" value="Pkinase"/>
    <property type="match status" value="2"/>
</dbReference>
<dbReference type="SMART" id="SM00220">
    <property type="entry name" value="S_TKc"/>
    <property type="match status" value="2"/>
</dbReference>
<dbReference type="SUPFAM" id="SSF56112">
    <property type="entry name" value="Protein kinase-like (PK-like)"/>
    <property type="match status" value="2"/>
</dbReference>
<dbReference type="SUPFAM" id="SSF50978">
    <property type="entry name" value="WD40 repeat-like"/>
    <property type="match status" value="1"/>
</dbReference>
<dbReference type="PROSITE" id="PS00107">
    <property type="entry name" value="PROTEIN_KINASE_ATP"/>
    <property type="match status" value="1"/>
</dbReference>
<dbReference type="PROSITE" id="PS50011">
    <property type="entry name" value="PROTEIN_KINASE_DOM"/>
    <property type="match status" value="2"/>
</dbReference>
<dbReference type="PROSITE" id="PS00108">
    <property type="entry name" value="PROTEIN_KINASE_ST"/>
    <property type="match status" value="1"/>
</dbReference>
<proteinExistence type="inferred from homology"/>
<protein>
    <recommendedName>
        <fullName evidence="3">Probable serine/threonine-protein kinase fnkE</fullName>
        <ecNumber>2.7.11.1</ecNumber>
    </recommendedName>
    <alternativeName>
        <fullName>FNIP repeat-containing protein E</fullName>
    </alternativeName>
</protein>
<name>FNKE_DICDI</name>
<feature type="chain" id="PRO_0000379937" description="Probable serine/threonine-protein kinase fnkE">
    <location>
        <begin position="1"/>
        <end position="1321"/>
    </location>
</feature>
<feature type="repeat" description="FNIP 1" evidence="4">
    <location>
        <begin position="108"/>
        <end position="149"/>
    </location>
</feature>
<feature type="repeat" description="FNIP 2" evidence="4">
    <location>
        <begin position="150"/>
        <end position="191"/>
    </location>
</feature>
<feature type="repeat" description="FNIP 3" evidence="4">
    <location>
        <begin position="192"/>
        <end position="233"/>
    </location>
</feature>
<feature type="repeat" description="FNIP 4" evidence="4">
    <location>
        <begin position="255"/>
        <end position="296"/>
    </location>
</feature>
<feature type="domain" description="Protein kinase 1" evidence="5">
    <location>
        <begin position="295"/>
        <end position="595"/>
    </location>
</feature>
<feature type="repeat" description="FNIP 5" evidence="4">
    <location>
        <begin position="654"/>
        <end position="696"/>
    </location>
</feature>
<feature type="repeat" description="FNIP 6" evidence="4">
    <location>
        <begin position="741"/>
        <end position="783"/>
    </location>
</feature>
<feature type="domain" description="Protein kinase 2" evidence="5">
    <location>
        <begin position="860"/>
        <end position="1128"/>
    </location>
</feature>
<feature type="repeat" description="FNIP 7" evidence="4">
    <location>
        <begin position="1160"/>
        <end position="1202"/>
    </location>
</feature>
<feature type="repeat" description="FNIP 8" evidence="4">
    <location>
        <begin position="1224"/>
        <end position="1268"/>
    </location>
</feature>
<feature type="active site" description="Proton acceptor" evidence="1">
    <location>
        <position position="465"/>
    </location>
</feature>
<feature type="active site" description="Proton acceptor" evidence="1">
    <location>
        <position position="990"/>
    </location>
</feature>
<feature type="binding site" evidence="1 5">
    <location>
        <begin position="301"/>
        <end position="309"/>
    </location>
    <ligand>
        <name>ATP</name>
        <dbReference type="ChEBI" id="CHEBI:30616"/>
    </ligand>
</feature>
<feature type="binding site" evidence="1 5">
    <location>
        <position position="325"/>
    </location>
    <ligand>
        <name>ATP</name>
        <dbReference type="ChEBI" id="CHEBI:30616"/>
    </ligand>
</feature>
<feature type="binding site" evidence="1 5">
    <location>
        <begin position="866"/>
        <end position="874"/>
    </location>
    <ligand>
        <name>ATP</name>
        <dbReference type="ChEBI" id="CHEBI:30616"/>
    </ligand>
</feature>
<feature type="binding site" evidence="1 5">
    <location>
        <position position="895"/>
    </location>
    <ligand>
        <name>ATP</name>
        <dbReference type="ChEBI" id="CHEBI:30616"/>
    </ligand>
</feature>
<comment type="catalytic activity">
    <reaction evidence="2">
        <text>L-seryl-[protein] + ATP = O-phospho-L-seryl-[protein] + ADP + H(+)</text>
        <dbReference type="Rhea" id="RHEA:17989"/>
        <dbReference type="Rhea" id="RHEA-COMP:9863"/>
        <dbReference type="Rhea" id="RHEA-COMP:11604"/>
        <dbReference type="ChEBI" id="CHEBI:15378"/>
        <dbReference type="ChEBI" id="CHEBI:29999"/>
        <dbReference type="ChEBI" id="CHEBI:30616"/>
        <dbReference type="ChEBI" id="CHEBI:83421"/>
        <dbReference type="ChEBI" id="CHEBI:456216"/>
        <dbReference type="EC" id="2.7.11.1"/>
    </reaction>
</comment>
<comment type="catalytic activity">
    <reaction evidence="2">
        <text>L-threonyl-[protein] + ATP = O-phospho-L-threonyl-[protein] + ADP + H(+)</text>
        <dbReference type="Rhea" id="RHEA:46608"/>
        <dbReference type="Rhea" id="RHEA-COMP:11060"/>
        <dbReference type="Rhea" id="RHEA-COMP:11605"/>
        <dbReference type="ChEBI" id="CHEBI:15378"/>
        <dbReference type="ChEBI" id="CHEBI:30013"/>
        <dbReference type="ChEBI" id="CHEBI:30616"/>
        <dbReference type="ChEBI" id="CHEBI:61977"/>
        <dbReference type="ChEBI" id="CHEBI:456216"/>
        <dbReference type="EC" id="2.7.11.1"/>
    </reaction>
</comment>
<comment type="cofactor">
    <cofactor evidence="2">
        <name>Mg(2+)</name>
        <dbReference type="ChEBI" id="CHEBI:18420"/>
    </cofactor>
</comment>
<comment type="similarity">
    <text evidence="4">Belongs to the protein kinase superfamily. STE Ser/Thr protein kinase family.</text>
</comment>
<keyword id="KW-0067">ATP-binding</keyword>
<keyword id="KW-0418">Kinase</keyword>
<keyword id="KW-0460">Magnesium</keyword>
<keyword id="KW-0479">Metal-binding</keyword>
<keyword id="KW-0547">Nucleotide-binding</keyword>
<keyword id="KW-1185">Reference proteome</keyword>
<keyword id="KW-0677">Repeat</keyword>
<keyword id="KW-0723">Serine/threonine-protein kinase</keyword>
<keyword id="KW-0808">Transferase</keyword>
<reference evidence="6" key="1">
    <citation type="journal article" date="2002" name="Nature">
        <title>Sequence and analysis of chromosome 2 of Dictyostelium discoideum.</title>
        <authorList>
            <person name="Gloeckner G."/>
            <person name="Eichinger L."/>
            <person name="Szafranski K."/>
            <person name="Pachebat J.A."/>
            <person name="Bankier A.T."/>
            <person name="Dear P.H."/>
            <person name="Lehmann R."/>
            <person name="Baumgart C."/>
            <person name="Parra G."/>
            <person name="Abril J.F."/>
            <person name="Guigo R."/>
            <person name="Kumpf K."/>
            <person name="Tunggal B."/>
            <person name="Cox E.C."/>
            <person name="Quail M.A."/>
            <person name="Platzer M."/>
            <person name="Rosenthal A."/>
            <person name="Noegel A.A."/>
        </authorList>
    </citation>
    <scope>NUCLEOTIDE SEQUENCE [LARGE SCALE GENOMIC DNA]</scope>
    <source>
        <strain evidence="6">AX4</strain>
    </source>
</reference>
<reference evidence="6" key="2">
    <citation type="journal article" date="2005" name="Nature">
        <title>The genome of the social amoeba Dictyostelium discoideum.</title>
        <authorList>
            <person name="Eichinger L."/>
            <person name="Pachebat J.A."/>
            <person name="Gloeckner G."/>
            <person name="Rajandream M.A."/>
            <person name="Sucgang R."/>
            <person name="Berriman M."/>
            <person name="Song J."/>
            <person name="Olsen R."/>
            <person name="Szafranski K."/>
            <person name="Xu Q."/>
            <person name="Tunggal B."/>
            <person name="Kummerfeld S."/>
            <person name="Madera M."/>
            <person name="Konfortov B.A."/>
            <person name="Rivero F."/>
            <person name="Bankier A.T."/>
            <person name="Lehmann R."/>
            <person name="Hamlin N."/>
            <person name="Davies R."/>
            <person name="Gaudet P."/>
            <person name="Fey P."/>
            <person name="Pilcher K."/>
            <person name="Chen G."/>
            <person name="Saunders D."/>
            <person name="Sodergren E.J."/>
            <person name="Davis P."/>
            <person name="Kerhornou A."/>
            <person name="Nie X."/>
            <person name="Hall N."/>
            <person name="Anjard C."/>
            <person name="Hemphill L."/>
            <person name="Bason N."/>
            <person name="Farbrother P."/>
            <person name="Desany B."/>
            <person name="Just E."/>
            <person name="Morio T."/>
            <person name="Rost R."/>
            <person name="Churcher C.M."/>
            <person name="Cooper J."/>
            <person name="Haydock S."/>
            <person name="van Driessche N."/>
            <person name="Cronin A."/>
            <person name="Goodhead I."/>
            <person name="Muzny D.M."/>
            <person name="Mourier T."/>
            <person name="Pain A."/>
            <person name="Lu M."/>
            <person name="Harper D."/>
            <person name="Lindsay R."/>
            <person name="Hauser H."/>
            <person name="James K.D."/>
            <person name="Quiles M."/>
            <person name="Madan Babu M."/>
            <person name="Saito T."/>
            <person name="Buchrieser C."/>
            <person name="Wardroper A."/>
            <person name="Felder M."/>
            <person name="Thangavelu M."/>
            <person name="Johnson D."/>
            <person name="Knights A."/>
            <person name="Loulseged H."/>
            <person name="Mungall K.L."/>
            <person name="Oliver K."/>
            <person name="Price C."/>
            <person name="Quail M.A."/>
            <person name="Urushihara H."/>
            <person name="Hernandez J."/>
            <person name="Rabbinowitsch E."/>
            <person name="Steffen D."/>
            <person name="Sanders M."/>
            <person name="Ma J."/>
            <person name="Kohara Y."/>
            <person name="Sharp S."/>
            <person name="Simmonds M.N."/>
            <person name="Spiegler S."/>
            <person name="Tivey A."/>
            <person name="Sugano S."/>
            <person name="White B."/>
            <person name="Walker D."/>
            <person name="Woodward J.R."/>
            <person name="Winckler T."/>
            <person name="Tanaka Y."/>
            <person name="Shaulsky G."/>
            <person name="Schleicher M."/>
            <person name="Weinstock G.M."/>
            <person name="Rosenthal A."/>
            <person name="Cox E.C."/>
            <person name="Chisholm R.L."/>
            <person name="Gibbs R.A."/>
            <person name="Loomis W.F."/>
            <person name="Platzer M."/>
            <person name="Kay R.R."/>
            <person name="Williams J.G."/>
            <person name="Dear P.H."/>
            <person name="Noegel A.A."/>
            <person name="Barrell B.G."/>
            <person name="Kuspa A."/>
        </authorList>
    </citation>
    <scope>NUCLEOTIDE SEQUENCE [LARGE SCALE GENOMIC DNA]</scope>
    <source>
        <strain evidence="6">AX4</strain>
    </source>
</reference>